<evidence type="ECO:0000255" key="1">
    <source>
        <dbReference type="HAMAP-Rule" id="MF_00381"/>
    </source>
</evidence>
<evidence type="ECO:0000256" key="2">
    <source>
        <dbReference type="SAM" id="MobiDB-lite"/>
    </source>
</evidence>
<sequence>MTKSELIAALAARYPQLAARDTDYAVKTMLDAMTQALASGQRIEIRGFGSFSLSQRSPRVGRNPKSGEQVLVPGKQVPHFKAGKELRERVDLAGGLADTQPDGDAPDQPQPTLLGLHAM</sequence>
<dbReference type="EMBL" id="AM902716">
    <property type="protein sequence ID" value="CAP42230.1"/>
    <property type="molecule type" value="Genomic_DNA"/>
</dbReference>
<dbReference type="SMR" id="A9IJJ1"/>
<dbReference type="STRING" id="94624.Bpet1891"/>
<dbReference type="KEGG" id="bpt:Bpet1891"/>
<dbReference type="eggNOG" id="COG0776">
    <property type="taxonomic scope" value="Bacteria"/>
</dbReference>
<dbReference type="Proteomes" id="UP000001225">
    <property type="component" value="Chromosome"/>
</dbReference>
<dbReference type="GO" id="GO:0005694">
    <property type="term" value="C:chromosome"/>
    <property type="evidence" value="ECO:0007669"/>
    <property type="project" value="InterPro"/>
</dbReference>
<dbReference type="GO" id="GO:0005829">
    <property type="term" value="C:cytosol"/>
    <property type="evidence" value="ECO:0007669"/>
    <property type="project" value="TreeGrafter"/>
</dbReference>
<dbReference type="GO" id="GO:0003677">
    <property type="term" value="F:DNA binding"/>
    <property type="evidence" value="ECO:0007669"/>
    <property type="project" value="UniProtKB-UniRule"/>
</dbReference>
<dbReference type="GO" id="GO:0030527">
    <property type="term" value="F:structural constituent of chromatin"/>
    <property type="evidence" value="ECO:0007669"/>
    <property type="project" value="InterPro"/>
</dbReference>
<dbReference type="GO" id="GO:0006310">
    <property type="term" value="P:DNA recombination"/>
    <property type="evidence" value="ECO:0007669"/>
    <property type="project" value="UniProtKB-UniRule"/>
</dbReference>
<dbReference type="GO" id="GO:0006355">
    <property type="term" value="P:regulation of DNA-templated transcription"/>
    <property type="evidence" value="ECO:0007669"/>
    <property type="project" value="UniProtKB-UniRule"/>
</dbReference>
<dbReference type="GO" id="GO:0006417">
    <property type="term" value="P:regulation of translation"/>
    <property type="evidence" value="ECO:0007669"/>
    <property type="project" value="UniProtKB-UniRule"/>
</dbReference>
<dbReference type="CDD" id="cd13836">
    <property type="entry name" value="IHF_B"/>
    <property type="match status" value="1"/>
</dbReference>
<dbReference type="Gene3D" id="4.10.520.10">
    <property type="entry name" value="IHF-like DNA-binding proteins"/>
    <property type="match status" value="1"/>
</dbReference>
<dbReference type="HAMAP" id="MF_00381">
    <property type="entry name" value="IHF_beta"/>
    <property type="match status" value="1"/>
</dbReference>
<dbReference type="InterPro" id="IPR000119">
    <property type="entry name" value="Hist_DNA-bd"/>
</dbReference>
<dbReference type="InterPro" id="IPR010992">
    <property type="entry name" value="IHF-like_DNA-bd_dom_sf"/>
</dbReference>
<dbReference type="InterPro" id="IPR005685">
    <property type="entry name" value="IHF_beta"/>
</dbReference>
<dbReference type="NCBIfam" id="TIGR00988">
    <property type="entry name" value="hip"/>
    <property type="match status" value="1"/>
</dbReference>
<dbReference type="NCBIfam" id="NF001222">
    <property type="entry name" value="PRK00199.1"/>
    <property type="match status" value="1"/>
</dbReference>
<dbReference type="PANTHER" id="PTHR33175">
    <property type="entry name" value="DNA-BINDING PROTEIN HU"/>
    <property type="match status" value="1"/>
</dbReference>
<dbReference type="PANTHER" id="PTHR33175:SF5">
    <property type="entry name" value="INTEGRATION HOST FACTOR SUBUNIT BETA"/>
    <property type="match status" value="1"/>
</dbReference>
<dbReference type="Pfam" id="PF00216">
    <property type="entry name" value="Bac_DNA_binding"/>
    <property type="match status" value="1"/>
</dbReference>
<dbReference type="PRINTS" id="PR01727">
    <property type="entry name" value="DNABINDINGHU"/>
</dbReference>
<dbReference type="SMART" id="SM00411">
    <property type="entry name" value="BHL"/>
    <property type="match status" value="1"/>
</dbReference>
<dbReference type="SUPFAM" id="SSF47729">
    <property type="entry name" value="IHF-like DNA-binding proteins"/>
    <property type="match status" value="1"/>
</dbReference>
<organism>
    <name type="scientific">Bordetella petrii (strain ATCC BAA-461 / DSM 12804 / CCUG 43448)</name>
    <dbReference type="NCBI Taxonomy" id="340100"/>
    <lineage>
        <taxon>Bacteria</taxon>
        <taxon>Pseudomonadati</taxon>
        <taxon>Pseudomonadota</taxon>
        <taxon>Betaproteobacteria</taxon>
        <taxon>Burkholderiales</taxon>
        <taxon>Alcaligenaceae</taxon>
        <taxon>Bordetella</taxon>
    </lineage>
</organism>
<protein>
    <recommendedName>
        <fullName evidence="1">Integration host factor subunit beta</fullName>
        <shortName evidence="1">IHF-beta</shortName>
    </recommendedName>
</protein>
<feature type="chain" id="PRO_1000122185" description="Integration host factor subunit beta">
    <location>
        <begin position="1"/>
        <end position="119"/>
    </location>
</feature>
<feature type="region of interest" description="Disordered" evidence="2">
    <location>
        <begin position="93"/>
        <end position="119"/>
    </location>
</feature>
<feature type="compositionally biased region" description="Low complexity" evidence="2">
    <location>
        <begin position="97"/>
        <end position="112"/>
    </location>
</feature>
<accession>A9IJJ1</accession>
<gene>
    <name evidence="1" type="primary">ihfB</name>
    <name evidence="1" type="synonym">himD</name>
    <name type="ordered locus">Bpet1891</name>
</gene>
<proteinExistence type="inferred from homology"/>
<keyword id="KW-0233">DNA recombination</keyword>
<keyword id="KW-0238">DNA-binding</keyword>
<keyword id="KW-0804">Transcription</keyword>
<keyword id="KW-0805">Transcription regulation</keyword>
<keyword id="KW-0810">Translation regulation</keyword>
<name>IHFB_BORPD</name>
<reference key="1">
    <citation type="journal article" date="2008" name="BMC Genomics">
        <title>The missing link: Bordetella petrii is endowed with both the metabolic versatility of environmental bacteria and virulence traits of pathogenic Bordetellae.</title>
        <authorList>
            <person name="Gross R."/>
            <person name="Guzman C.A."/>
            <person name="Sebaihia M."/>
            <person name="Martin dos Santos V.A.P."/>
            <person name="Pieper D.H."/>
            <person name="Koebnik R."/>
            <person name="Lechner M."/>
            <person name="Bartels D."/>
            <person name="Buhrmester J."/>
            <person name="Choudhuri J.V."/>
            <person name="Ebensen T."/>
            <person name="Gaigalat L."/>
            <person name="Herrmann S."/>
            <person name="Khachane A.N."/>
            <person name="Larisch C."/>
            <person name="Link S."/>
            <person name="Linke B."/>
            <person name="Meyer F."/>
            <person name="Mormann S."/>
            <person name="Nakunst D."/>
            <person name="Rueckert C."/>
            <person name="Schneiker-Bekel S."/>
            <person name="Schulze K."/>
            <person name="Voerholter F.-J."/>
            <person name="Yevsa T."/>
            <person name="Engle J.T."/>
            <person name="Goldman W.E."/>
            <person name="Puehler A."/>
            <person name="Goebel U.B."/>
            <person name="Goesmann A."/>
            <person name="Bloecker H."/>
            <person name="Kaiser O."/>
            <person name="Martinez-Arias R."/>
        </authorList>
    </citation>
    <scope>NUCLEOTIDE SEQUENCE [LARGE SCALE GENOMIC DNA]</scope>
    <source>
        <strain>ATCC BAA-461 / DSM 12804 / CCUG 43448</strain>
    </source>
</reference>
<comment type="function">
    <text evidence="1">This protein is one of the two subunits of integration host factor, a specific DNA-binding protein that functions in genetic recombination as well as in transcriptional and translational control.</text>
</comment>
<comment type="subunit">
    <text evidence="1">Heterodimer of an alpha and a beta chain.</text>
</comment>
<comment type="similarity">
    <text evidence="1">Belongs to the bacterial histone-like protein family.</text>
</comment>